<organism>
    <name type="scientific">Limosilactobacillus reuteri subsp. reuteri (strain JCM 1112)</name>
    <name type="common">Lactobacillus reuteri</name>
    <dbReference type="NCBI Taxonomy" id="557433"/>
    <lineage>
        <taxon>Bacteria</taxon>
        <taxon>Bacillati</taxon>
        <taxon>Bacillota</taxon>
        <taxon>Bacilli</taxon>
        <taxon>Lactobacillales</taxon>
        <taxon>Lactobacillaceae</taxon>
        <taxon>Limosilactobacillus</taxon>
    </lineage>
</organism>
<sequence>MKVRPSVKKMCEHCKIVKRNGRVMVICSANPKHKQRQGK</sequence>
<reference key="1">
    <citation type="journal article" date="2008" name="DNA Res.">
        <title>Comparative genome analysis of Lactobacillus reuteri and Lactobacillus fermentum reveal a genomic island for reuterin and cobalamin production.</title>
        <authorList>
            <person name="Morita H."/>
            <person name="Toh H."/>
            <person name="Fukuda S."/>
            <person name="Horikawa H."/>
            <person name="Oshima K."/>
            <person name="Suzuki T."/>
            <person name="Murakami M."/>
            <person name="Hisamatsu S."/>
            <person name="Kato Y."/>
            <person name="Takizawa T."/>
            <person name="Fukuoka H."/>
            <person name="Yoshimura T."/>
            <person name="Itoh K."/>
            <person name="O'Sullivan D.J."/>
            <person name="McKay L.L."/>
            <person name="Ohno H."/>
            <person name="Kikuchi J."/>
            <person name="Masaoka T."/>
            <person name="Hattori M."/>
        </authorList>
    </citation>
    <scope>NUCLEOTIDE SEQUENCE [LARGE SCALE GENOMIC DNA]</scope>
    <source>
        <strain>JCM 1112</strain>
    </source>
</reference>
<gene>
    <name evidence="1" type="primary">rpmJ</name>
    <name type="ordered locus">LAR_1371</name>
</gene>
<evidence type="ECO:0000255" key="1">
    <source>
        <dbReference type="HAMAP-Rule" id="MF_00251"/>
    </source>
</evidence>
<evidence type="ECO:0000305" key="2"/>
<name>RL36_LIMRJ</name>
<accession>B2G8V5</accession>
<dbReference type="EMBL" id="AP007281">
    <property type="protein sequence ID" value="BAG25887.1"/>
    <property type="molecule type" value="Genomic_DNA"/>
</dbReference>
<dbReference type="RefSeq" id="WP_003664535.1">
    <property type="nucleotide sequence ID" value="NC_010609.1"/>
</dbReference>
<dbReference type="SMR" id="B2G8V5"/>
<dbReference type="GeneID" id="77191456"/>
<dbReference type="KEGG" id="lrf:LAR_1371"/>
<dbReference type="HOGENOM" id="CLU_135723_6_2_9"/>
<dbReference type="GO" id="GO:0005737">
    <property type="term" value="C:cytoplasm"/>
    <property type="evidence" value="ECO:0007669"/>
    <property type="project" value="UniProtKB-ARBA"/>
</dbReference>
<dbReference type="GO" id="GO:1990904">
    <property type="term" value="C:ribonucleoprotein complex"/>
    <property type="evidence" value="ECO:0007669"/>
    <property type="project" value="UniProtKB-KW"/>
</dbReference>
<dbReference type="GO" id="GO:0005840">
    <property type="term" value="C:ribosome"/>
    <property type="evidence" value="ECO:0007669"/>
    <property type="project" value="UniProtKB-KW"/>
</dbReference>
<dbReference type="GO" id="GO:0003735">
    <property type="term" value="F:structural constituent of ribosome"/>
    <property type="evidence" value="ECO:0007669"/>
    <property type="project" value="InterPro"/>
</dbReference>
<dbReference type="GO" id="GO:0006412">
    <property type="term" value="P:translation"/>
    <property type="evidence" value="ECO:0007669"/>
    <property type="project" value="UniProtKB-UniRule"/>
</dbReference>
<dbReference type="HAMAP" id="MF_00251">
    <property type="entry name" value="Ribosomal_bL36"/>
    <property type="match status" value="1"/>
</dbReference>
<dbReference type="InterPro" id="IPR000473">
    <property type="entry name" value="Ribosomal_bL36"/>
</dbReference>
<dbReference type="InterPro" id="IPR035977">
    <property type="entry name" value="Ribosomal_bL36_sp"/>
</dbReference>
<dbReference type="NCBIfam" id="TIGR01022">
    <property type="entry name" value="rpmJ_bact"/>
    <property type="match status" value="1"/>
</dbReference>
<dbReference type="PANTHER" id="PTHR42888">
    <property type="entry name" value="50S RIBOSOMAL PROTEIN L36, CHLOROPLASTIC"/>
    <property type="match status" value="1"/>
</dbReference>
<dbReference type="PANTHER" id="PTHR42888:SF1">
    <property type="entry name" value="LARGE RIBOSOMAL SUBUNIT PROTEIN BL36C"/>
    <property type="match status" value="1"/>
</dbReference>
<dbReference type="Pfam" id="PF00444">
    <property type="entry name" value="Ribosomal_L36"/>
    <property type="match status" value="1"/>
</dbReference>
<dbReference type="SUPFAM" id="SSF57840">
    <property type="entry name" value="Ribosomal protein L36"/>
    <property type="match status" value="1"/>
</dbReference>
<dbReference type="PROSITE" id="PS00828">
    <property type="entry name" value="RIBOSOMAL_L36"/>
    <property type="match status" value="1"/>
</dbReference>
<proteinExistence type="inferred from homology"/>
<protein>
    <recommendedName>
        <fullName evidence="1">Large ribosomal subunit protein bL36</fullName>
    </recommendedName>
    <alternativeName>
        <fullName evidence="2">50S ribosomal protein L36</fullName>
    </alternativeName>
</protein>
<feature type="chain" id="PRO_1000101037" description="Large ribosomal subunit protein bL36">
    <location>
        <begin position="1"/>
        <end position="39"/>
    </location>
</feature>
<keyword id="KW-0687">Ribonucleoprotein</keyword>
<keyword id="KW-0689">Ribosomal protein</keyword>
<comment type="similarity">
    <text evidence="1">Belongs to the bacterial ribosomal protein bL36 family.</text>
</comment>